<organism>
    <name type="scientific">Amsacta moorei entomopoxvirus</name>
    <name type="common">AmEPV</name>
    <dbReference type="NCBI Taxonomy" id="28321"/>
    <lineage>
        <taxon>Viruses</taxon>
        <taxon>Varidnaviria</taxon>
        <taxon>Bamfordvirae</taxon>
        <taxon>Nucleocytoviricota</taxon>
        <taxon>Pokkesviricetes</taxon>
        <taxon>Chitovirales</taxon>
        <taxon>Poxviridae</taxon>
        <taxon>Entomopoxvirinae</taxon>
        <taxon>Betaentomopoxvirus</taxon>
    </lineage>
</organism>
<dbReference type="EC" id="2.7.1.21"/>
<dbReference type="EMBL" id="D10679">
    <property type="protein sequence ID" value="BAA01525.1"/>
    <property type="molecule type" value="Genomic_DNA"/>
</dbReference>
<dbReference type="EMBL" id="M80924">
    <property type="protein sequence ID" value="AAA42386.1"/>
    <property type="molecule type" value="Genomic_DNA"/>
</dbReference>
<dbReference type="EMBL" id="AF250284">
    <property type="protein sequence ID" value="AAG02722.1"/>
    <property type="molecule type" value="Genomic_DNA"/>
</dbReference>
<dbReference type="PIR" id="B40818">
    <property type="entry name" value="KIVZAM"/>
</dbReference>
<dbReference type="RefSeq" id="NP_064798.1">
    <property type="nucleotide sequence ID" value="NC_002520.1"/>
</dbReference>
<dbReference type="SMR" id="P28852"/>
<dbReference type="GeneID" id="1494606"/>
<dbReference type="KEGG" id="vg:1494606"/>
<dbReference type="OrthoDB" id="9611at10239"/>
<dbReference type="Proteomes" id="UP000000872">
    <property type="component" value="Genome"/>
</dbReference>
<dbReference type="GO" id="GO:0005524">
    <property type="term" value="F:ATP binding"/>
    <property type="evidence" value="ECO:0007669"/>
    <property type="project" value="UniProtKB-KW"/>
</dbReference>
<dbReference type="GO" id="GO:0046872">
    <property type="term" value="F:metal ion binding"/>
    <property type="evidence" value="ECO:0007669"/>
    <property type="project" value="UniProtKB-KW"/>
</dbReference>
<dbReference type="GO" id="GO:0004797">
    <property type="term" value="F:thymidine kinase activity"/>
    <property type="evidence" value="ECO:0007669"/>
    <property type="project" value="UniProtKB-EC"/>
</dbReference>
<dbReference type="GO" id="GO:0071897">
    <property type="term" value="P:DNA biosynthetic process"/>
    <property type="evidence" value="ECO:0007669"/>
    <property type="project" value="UniProtKB-KW"/>
</dbReference>
<dbReference type="GO" id="GO:0046104">
    <property type="term" value="P:thymidine metabolic process"/>
    <property type="evidence" value="ECO:0007669"/>
    <property type="project" value="TreeGrafter"/>
</dbReference>
<dbReference type="FunFam" id="3.40.50.300:FF:000948">
    <property type="entry name" value="Thymidine kinase"/>
    <property type="match status" value="1"/>
</dbReference>
<dbReference type="Gene3D" id="3.30.60.20">
    <property type="match status" value="1"/>
</dbReference>
<dbReference type="Gene3D" id="3.40.50.300">
    <property type="entry name" value="P-loop containing nucleotide triphosphate hydrolases"/>
    <property type="match status" value="1"/>
</dbReference>
<dbReference type="InterPro" id="IPR027417">
    <property type="entry name" value="P-loop_NTPase"/>
</dbReference>
<dbReference type="InterPro" id="IPR001267">
    <property type="entry name" value="Thymidine_kinase"/>
</dbReference>
<dbReference type="InterPro" id="IPR020633">
    <property type="entry name" value="Thymidine_kinase_CS"/>
</dbReference>
<dbReference type="PANTHER" id="PTHR11441">
    <property type="entry name" value="THYMIDINE KINASE"/>
    <property type="match status" value="1"/>
</dbReference>
<dbReference type="PANTHER" id="PTHR11441:SF0">
    <property type="entry name" value="THYMIDINE KINASE, CYTOSOLIC"/>
    <property type="match status" value="1"/>
</dbReference>
<dbReference type="Pfam" id="PF00265">
    <property type="entry name" value="TK"/>
    <property type="match status" value="1"/>
</dbReference>
<dbReference type="PIRSF" id="PIRSF035805">
    <property type="entry name" value="TK_cell"/>
    <property type="match status" value="1"/>
</dbReference>
<dbReference type="SUPFAM" id="SSF57716">
    <property type="entry name" value="Glucocorticoid receptor-like (DNA-binding domain)"/>
    <property type="match status" value="1"/>
</dbReference>
<dbReference type="SUPFAM" id="SSF52540">
    <property type="entry name" value="P-loop containing nucleoside triphosphate hydrolases"/>
    <property type="match status" value="1"/>
</dbReference>
<dbReference type="PROSITE" id="PS00603">
    <property type="entry name" value="TK_CELLULAR_TYPE"/>
    <property type="match status" value="1"/>
</dbReference>
<feature type="chain" id="PRO_0000174942" description="Thymidine kinase">
    <location>
        <begin position="1"/>
        <end position="182"/>
    </location>
</feature>
<feature type="active site" description="Proton acceptor" evidence="2">
    <location>
        <position position="85"/>
    </location>
</feature>
<feature type="binding site" evidence="1">
    <location>
        <begin position="8"/>
        <end position="15"/>
    </location>
    <ligand>
        <name>ATP</name>
        <dbReference type="ChEBI" id="CHEBI:30616"/>
    </ligand>
</feature>
<feature type="binding site" evidence="1">
    <location>
        <position position="117"/>
    </location>
    <ligand>
        <name>substrate</name>
    </ligand>
</feature>
<feature type="binding site" evidence="1">
    <location>
        <position position="142"/>
    </location>
    <ligand>
        <name>Zn(2+)</name>
        <dbReference type="ChEBI" id="CHEBI:29105"/>
    </ligand>
</feature>
<feature type="binding site" evidence="1">
    <location>
        <position position="145"/>
    </location>
    <ligand>
        <name>Zn(2+)</name>
        <dbReference type="ChEBI" id="CHEBI:29105"/>
    </ligand>
</feature>
<feature type="binding site" evidence="1">
    <location>
        <begin position="161"/>
        <end position="165"/>
    </location>
    <ligand>
        <name>substrate</name>
    </ligand>
</feature>
<feature type="binding site" evidence="1">
    <location>
        <position position="174"/>
    </location>
    <ligand>
        <name>Zn(2+)</name>
        <dbReference type="ChEBI" id="CHEBI:29105"/>
    </ligand>
</feature>
<feature type="binding site" evidence="1">
    <location>
        <position position="177"/>
    </location>
    <ligand>
        <name>Zn(2+)</name>
        <dbReference type="ChEBI" id="CHEBI:29105"/>
    </ligand>
</feature>
<proteinExistence type="inferred from homology"/>
<keyword id="KW-0067">ATP-binding</keyword>
<keyword id="KW-0237">DNA synthesis</keyword>
<keyword id="KW-0418">Kinase</keyword>
<keyword id="KW-0479">Metal-binding</keyword>
<keyword id="KW-0547">Nucleotide-binding</keyword>
<keyword id="KW-1185">Reference proteome</keyword>
<keyword id="KW-0808">Transferase</keyword>
<keyword id="KW-0862">Zinc</keyword>
<evidence type="ECO:0000250" key="1"/>
<evidence type="ECO:0000255" key="2"/>
<evidence type="ECO:0000305" key="3"/>
<reference key="1">
    <citation type="journal article" date="1992" name="Virology">
        <title>Mapping and molecular characterization of a functional thymidine kinase from Amsacta moorei entomopoxvirus.</title>
        <authorList>
            <person name="Gruidl M.E."/>
            <person name="Hall R.L."/>
            <person name="Moyer R.W."/>
        </authorList>
    </citation>
    <scope>NUCLEOTIDE SEQUENCE [GENOMIC DNA]</scope>
</reference>
<reference key="2">
    <citation type="journal article" date="1992" name="J. Gen. Virol.">
        <title>Comparison of the thymidine kinase genes from three entomopoxviruses.</title>
        <authorList>
            <person name="Lytvyn V."/>
            <person name="Fortin Y."/>
            <person name="Banville M."/>
            <person name="Arif B."/>
            <person name="Richardson C."/>
        </authorList>
    </citation>
    <scope>NUCLEOTIDE SEQUENCE [GENOMIC DNA]</scope>
</reference>
<reference key="3">
    <citation type="journal article" date="2000" name="Virology">
        <title>Complete genomic sequence of the Amsacta moorei entomopoxvirus: analysis and comparison with other poxviruses.</title>
        <authorList>
            <person name="Bawden A.L."/>
            <person name="Glassberg K.J."/>
            <person name="Diggans J."/>
            <person name="Shaw R."/>
            <person name="Farmerie W."/>
            <person name="Moyer R.W."/>
        </authorList>
    </citation>
    <scope>NUCLEOTIDE SEQUENCE [LARGE SCALE GENOMIC DNA]</scope>
</reference>
<organismHost>
    <name type="scientific">Amsacta</name>
    <dbReference type="NCBI Taxonomy" id="340055"/>
</organismHost>
<sequence length="182" mass="21241">MSIELIIGPMFSGKTTELMRKINRYILSNQKCVIITHNIDNRFINKNIINHDGNILNKEYLYIKTNNLINEINIVDNYDIIGIDECQFFEENDLEQFCDKMANNKKKVIVAGLNCDFNRNIFNSISKLIPKVEKIKKLQAICQFCYKDASFTIKKHNKNQIIEIGGQDLYVPVCRLCYNNSY</sequence>
<gene>
    <name type="primary">TK</name>
    <name type="ordered locus">AMV016</name>
    <name type="ORF">Q2</name>
</gene>
<name>KITH_AMEPV</name>
<comment type="catalytic activity">
    <reaction>
        <text>thymidine + ATP = dTMP + ADP + H(+)</text>
        <dbReference type="Rhea" id="RHEA:19129"/>
        <dbReference type="ChEBI" id="CHEBI:15378"/>
        <dbReference type="ChEBI" id="CHEBI:17748"/>
        <dbReference type="ChEBI" id="CHEBI:30616"/>
        <dbReference type="ChEBI" id="CHEBI:63528"/>
        <dbReference type="ChEBI" id="CHEBI:456216"/>
        <dbReference type="EC" id="2.7.1.21"/>
    </reaction>
</comment>
<comment type="similarity">
    <text evidence="3">Belongs to the thymidine kinase family.</text>
</comment>
<accession>P28852</accession>
<protein>
    <recommendedName>
        <fullName>Thymidine kinase</fullName>
        <ecNumber>2.7.1.21</ecNumber>
    </recommendedName>
</protein>